<dbReference type="EMBL" id="CU329670">
    <property type="protein sequence ID" value="CAB90797.1"/>
    <property type="molecule type" value="Genomic_DNA"/>
</dbReference>
<dbReference type="RefSeq" id="NP_594553.1">
    <property type="nucleotide sequence ID" value="NM_001019982.2"/>
</dbReference>
<dbReference type="BioGRID" id="278108">
    <property type="interactions" value="10"/>
</dbReference>
<dbReference type="FunCoup" id="Q9P6K1">
    <property type="interactions" value="227"/>
</dbReference>
<dbReference type="STRING" id="284812.Q9P6K1"/>
<dbReference type="PaxDb" id="4896-SPAC1527.02.1"/>
<dbReference type="EnsemblFungi" id="SPAC1527.02.1">
    <property type="protein sequence ID" value="SPAC1527.02.1:pep"/>
    <property type="gene ID" value="SPAC1527.02"/>
</dbReference>
<dbReference type="GeneID" id="2541611"/>
<dbReference type="KEGG" id="spo:2541611"/>
<dbReference type="PomBase" id="SPAC1527.02">
    <property type="gene designation" value="sft2"/>
</dbReference>
<dbReference type="VEuPathDB" id="FungiDB:SPAC1527.02"/>
<dbReference type="eggNOG" id="KOG2887">
    <property type="taxonomic scope" value="Eukaryota"/>
</dbReference>
<dbReference type="HOGENOM" id="CLU_099529_3_0_1"/>
<dbReference type="InParanoid" id="Q9P6K1"/>
<dbReference type="OMA" id="PTHNEGP"/>
<dbReference type="PhylomeDB" id="Q9P6K1"/>
<dbReference type="PRO" id="PR:Q9P6K1"/>
<dbReference type="Proteomes" id="UP000002485">
    <property type="component" value="Chromosome I"/>
</dbReference>
<dbReference type="GO" id="GO:0005829">
    <property type="term" value="C:cytosol"/>
    <property type="evidence" value="ECO:0007669"/>
    <property type="project" value="GOC"/>
</dbReference>
<dbReference type="GO" id="GO:0000329">
    <property type="term" value="C:fungal-type vacuole membrane"/>
    <property type="evidence" value="ECO:0007005"/>
    <property type="project" value="PomBase"/>
</dbReference>
<dbReference type="GO" id="GO:0005794">
    <property type="term" value="C:Golgi apparatus"/>
    <property type="evidence" value="ECO:0007005"/>
    <property type="project" value="PomBase"/>
</dbReference>
<dbReference type="GO" id="GO:0000139">
    <property type="term" value="C:Golgi membrane"/>
    <property type="evidence" value="ECO:0000266"/>
    <property type="project" value="PomBase"/>
</dbReference>
<dbReference type="GO" id="GO:0006895">
    <property type="term" value="P:Golgi to endosome transport"/>
    <property type="evidence" value="ECO:0000266"/>
    <property type="project" value="PomBase"/>
</dbReference>
<dbReference type="GO" id="GO:0006886">
    <property type="term" value="P:intracellular protein transport"/>
    <property type="evidence" value="ECO:0000266"/>
    <property type="project" value="PomBase"/>
</dbReference>
<dbReference type="InterPro" id="IPR007305">
    <property type="entry name" value="Vesicle_transpt_Got1/SFT2"/>
</dbReference>
<dbReference type="InterPro" id="IPR011691">
    <property type="entry name" value="Vesicle_transpt_SFT2"/>
</dbReference>
<dbReference type="PANTHER" id="PTHR23137:SF36">
    <property type="entry name" value="VESICLE TRANSPORT PROTEIN SFT2C"/>
    <property type="match status" value="1"/>
</dbReference>
<dbReference type="PANTHER" id="PTHR23137">
    <property type="entry name" value="VESICLE TRANSPORT PROTEIN-RELATED"/>
    <property type="match status" value="1"/>
</dbReference>
<dbReference type="Pfam" id="PF04178">
    <property type="entry name" value="Got1"/>
    <property type="match status" value="1"/>
</dbReference>
<gene>
    <name type="primary">sft2</name>
    <name type="ORF">SPAC1527.02</name>
</gene>
<sequence length="201" mass="22649">MEGSFQSRLQSIIQRTGETTAESTNSWYNRLRTSMPWSNDYTEIPTNASGGNSYFQSSEFSLSRWERYMLFGICLLGSLACYAIACFMFPVLVLKPRKFVLLWTMGSLLAVLGFAIVQGFVAHFRQLTTMERLPITLSYFVTLLATIIATIKIKSTILSIVFGVLHILSFVAYLIAFFPFGTRTVSLGTRMASRSLSNWLP</sequence>
<comment type="function">
    <text evidence="2">Nonessential protein required for the fusion of transport vesicles derived from the endocytic pathway with the Golgi complex. Can be replaced by got1 (By similarity).</text>
</comment>
<comment type="subcellular location">
    <subcellularLocation>
        <location evidence="1">Golgi apparatus membrane</location>
        <topology evidence="1">Multi-pass membrane protein</topology>
    </subcellularLocation>
</comment>
<comment type="similarity">
    <text evidence="3">Belongs to the SFT2 family.</text>
</comment>
<proteinExistence type="inferred from homology"/>
<name>SFT2_SCHPO</name>
<keyword id="KW-0333">Golgi apparatus</keyword>
<keyword id="KW-0472">Membrane</keyword>
<keyword id="KW-0653">Protein transport</keyword>
<keyword id="KW-1185">Reference proteome</keyword>
<keyword id="KW-0812">Transmembrane</keyword>
<keyword id="KW-1133">Transmembrane helix</keyword>
<keyword id="KW-0813">Transport</keyword>
<accession>Q9P6K1</accession>
<reference evidence="4" key="1">
    <citation type="journal article" date="2002" name="Nature">
        <title>The genome sequence of Schizosaccharomyces pombe.</title>
        <authorList>
            <person name="Wood V."/>
            <person name="Gwilliam R."/>
            <person name="Rajandream M.A."/>
            <person name="Lyne M.H."/>
            <person name="Lyne R."/>
            <person name="Stewart A."/>
            <person name="Sgouros J.G."/>
            <person name="Peat N."/>
            <person name="Hayles J."/>
            <person name="Baker S.G."/>
            <person name="Basham D."/>
            <person name="Bowman S."/>
            <person name="Brooks K."/>
            <person name="Brown D."/>
            <person name="Brown S."/>
            <person name="Chillingworth T."/>
            <person name="Churcher C.M."/>
            <person name="Collins M."/>
            <person name="Connor R."/>
            <person name="Cronin A."/>
            <person name="Davis P."/>
            <person name="Feltwell T."/>
            <person name="Fraser A."/>
            <person name="Gentles S."/>
            <person name="Goble A."/>
            <person name="Hamlin N."/>
            <person name="Harris D.E."/>
            <person name="Hidalgo J."/>
            <person name="Hodgson G."/>
            <person name="Holroyd S."/>
            <person name="Hornsby T."/>
            <person name="Howarth S."/>
            <person name="Huckle E.J."/>
            <person name="Hunt S."/>
            <person name="Jagels K."/>
            <person name="James K.D."/>
            <person name="Jones L."/>
            <person name="Jones M."/>
            <person name="Leather S."/>
            <person name="McDonald S."/>
            <person name="McLean J."/>
            <person name="Mooney P."/>
            <person name="Moule S."/>
            <person name="Mungall K.L."/>
            <person name="Murphy L.D."/>
            <person name="Niblett D."/>
            <person name="Odell C."/>
            <person name="Oliver K."/>
            <person name="O'Neil S."/>
            <person name="Pearson D."/>
            <person name="Quail M.A."/>
            <person name="Rabbinowitsch E."/>
            <person name="Rutherford K.M."/>
            <person name="Rutter S."/>
            <person name="Saunders D."/>
            <person name="Seeger K."/>
            <person name="Sharp S."/>
            <person name="Skelton J."/>
            <person name="Simmonds M.N."/>
            <person name="Squares R."/>
            <person name="Squares S."/>
            <person name="Stevens K."/>
            <person name="Taylor K."/>
            <person name="Taylor R.G."/>
            <person name="Tivey A."/>
            <person name="Walsh S.V."/>
            <person name="Warren T."/>
            <person name="Whitehead S."/>
            <person name="Woodward J.R."/>
            <person name="Volckaert G."/>
            <person name="Aert R."/>
            <person name="Robben J."/>
            <person name="Grymonprez B."/>
            <person name="Weltjens I."/>
            <person name="Vanstreels E."/>
            <person name="Rieger M."/>
            <person name="Schaefer M."/>
            <person name="Mueller-Auer S."/>
            <person name="Gabel C."/>
            <person name="Fuchs M."/>
            <person name="Duesterhoeft A."/>
            <person name="Fritzc C."/>
            <person name="Holzer E."/>
            <person name="Moestl D."/>
            <person name="Hilbert H."/>
            <person name="Borzym K."/>
            <person name="Langer I."/>
            <person name="Beck A."/>
            <person name="Lehrach H."/>
            <person name="Reinhardt R."/>
            <person name="Pohl T.M."/>
            <person name="Eger P."/>
            <person name="Zimmermann W."/>
            <person name="Wedler H."/>
            <person name="Wambutt R."/>
            <person name="Purnelle B."/>
            <person name="Goffeau A."/>
            <person name="Cadieu E."/>
            <person name="Dreano S."/>
            <person name="Gloux S."/>
            <person name="Lelaure V."/>
            <person name="Mottier S."/>
            <person name="Galibert F."/>
            <person name="Aves S.J."/>
            <person name="Xiang Z."/>
            <person name="Hunt C."/>
            <person name="Moore K."/>
            <person name="Hurst S.M."/>
            <person name="Lucas M."/>
            <person name="Rochet M."/>
            <person name="Gaillardin C."/>
            <person name="Tallada V.A."/>
            <person name="Garzon A."/>
            <person name="Thode G."/>
            <person name="Daga R.R."/>
            <person name="Cruzado L."/>
            <person name="Jimenez J."/>
            <person name="Sanchez M."/>
            <person name="del Rey F."/>
            <person name="Benito J."/>
            <person name="Dominguez A."/>
            <person name="Revuelta J.L."/>
            <person name="Moreno S."/>
            <person name="Armstrong J."/>
            <person name="Forsburg S.L."/>
            <person name="Cerutti L."/>
            <person name="Lowe T."/>
            <person name="McCombie W.R."/>
            <person name="Paulsen I."/>
            <person name="Potashkin J."/>
            <person name="Shpakovski G.V."/>
            <person name="Ussery D."/>
            <person name="Barrell B.G."/>
            <person name="Nurse P."/>
        </authorList>
    </citation>
    <scope>NUCLEOTIDE SEQUENCE [LARGE SCALE GENOMIC DNA]</scope>
    <source>
        <strain>972 / ATCC 24843</strain>
    </source>
</reference>
<organism>
    <name type="scientific">Schizosaccharomyces pombe (strain 972 / ATCC 24843)</name>
    <name type="common">Fission yeast</name>
    <dbReference type="NCBI Taxonomy" id="284812"/>
    <lineage>
        <taxon>Eukaryota</taxon>
        <taxon>Fungi</taxon>
        <taxon>Dikarya</taxon>
        <taxon>Ascomycota</taxon>
        <taxon>Taphrinomycotina</taxon>
        <taxon>Schizosaccharomycetes</taxon>
        <taxon>Schizosaccharomycetales</taxon>
        <taxon>Schizosaccharomycetaceae</taxon>
        <taxon>Schizosaccharomyces</taxon>
    </lineage>
</organism>
<feature type="chain" id="PRO_0000238615" description="Protein transport protein sft2">
    <location>
        <begin position="1"/>
        <end position="201"/>
    </location>
</feature>
<feature type="topological domain" description="Cytoplasmic" evidence="3">
    <location>
        <begin position="1"/>
        <end position="68"/>
    </location>
</feature>
<feature type="transmembrane region" description="Helical; Name=1" evidence="3">
    <location>
        <begin position="69"/>
        <end position="89"/>
    </location>
</feature>
<feature type="topological domain" description="Lumenal" evidence="3">
    <location>
        <begin position="90"/>
        <end position="98"/>
    </location>
</feature>
<feature type="transmembrane region" description="Helical; Name=2" evidence="3">
    <location>
        <begin position="99"/>
        <end position="119"/>
    </location>
</feature>
<feature type="topological domain" description="Cytoplasmic" evidence="3">
    <location>
        <begin position="120"/>
        <end position="132"/>
    </location>
</feature>
<feature type="transmembrane region" description="Helical; Name=3" evidence="3">
    <location>
        <begin position="133"/>
        <end position="153"/>
    </location>
</feature>
<feature type="topological domain" description="Lumenal" evidence="3">
    <location>
        <begin position="154"/>
        <end position="159"/>
    </location>
</feature>
<feature type="transmembrane region" description="Helical; Name=4" evidence="3">
    <location>
        <begin position="160"/>
        <end position="180"/>
    </location>
</feature>
<feature type="topological domain" description="Cytoplasmic" evidence="3">
    <location>
        <begin position="181"/>
        <end position="201"/>
    </location>
</feature>
<protein>
    <recommendedName>
        <fullName>Protein transport protein sft2</fullName>
    </recommendedName>
</protein>
<evidence type="ECO:0000250" key="1"/>
<evidence type="ECO:0000250" key="2">
    <source>
        <dbReference type="UniProtKB" id="P38166"/>
    </source>
</evidence>
<evidence type="ECO:0000255" key="3"/>
<evidence type="ECO:0000312" key="4">
    <source>
        <dbReference type="EMBL" id="CAB90797.1"/>
    </source>
</evidence>